<keyword id="KW-0131">Cell cycle</keyword>
<keyword id="KW-0132">Cell division</keyword>
<keyword id="KW-0997">Cell inner membrane</keyword>
<keyword id="KW-1003">Cell membrane</keyword>
<keyword id="KW-0133">Cell shape</keyword>
<keyword id="KW-0961">Cell wall biogenesis/degradation</keyword>
<keyword id="KW-0460">Magnesium</keyword>
<keyword id="KW-0472">Membrane</keyword>
<keyword id="KW-0479">Metal-binding</keyword>
<keyword id="KW-0573">Peptidoglycan synthesis</keyword>
<keyword id="KW-0808">Transferase</keyword>
<keyword id="KW-0812">Transmembrane</keyword>
<keyword id="KW-1133">Transmembrane helix</keyword>
<dbReference type="EC" id="2.7.8.13" evidence="1"/>
<dbReference type="EMBL" id="AM902716">
    <property type="protein sequence ID" value="CAP41026.1"/>
    <property type="molecule type" value="Genomic_DNA"/>
</dbReference>
<dbReference type="SMR" id="A9I4U2"/>
<dbReference type="STRING" id="94624.Bpet0694"/>
<dbReference type="KEGG" id="bpt:Bpet0694"/>
<dbReference type="eggNOG" id="COG0472">
    <property type="taxonomic scope" value="Bacteria"/>
</dbReference>
<dbReference type="UniPathway" id="UPA00219"/>
<dbReference type="Proteomes" id="UP000001225">
    <property type="component" value="Chromosome"/>
</dbReference>
<dbReference type="GO" id="GO:0005886">
    <property type="term" value="C:plasma membrane"/>
    <property type="evidence" value="ECO:0007669"/>
    <property type="project" value="UniProtKB-SubCell"/>
</dbReference>
<dbReference type="GO" id="GO:0046872">
    <property type="term" value="F:metal ion binding"/>
    <property type="evidence" value="ECO:0007669"/>
    <property type="project" value="UniProtKB-KW"/>
</dbReference>
<dbReference type="GO" id="GO:0008963">
    <property type="term" value="F:phospho-N-acetylmuramoyl-pentapeptide-transferase activity"/>
    <property type="evidence" value="ECO:0007669"/>
    <property type="project" value="UniProtKB-UniRule"/>
</dbReference>
<dbReference type="GO" id="GO:0051992">
    <property type="term" value="F:UDP-N-acetylmuramoyl-L-alanyl-D-glutamyl-meso-2,6-diaminopimelyl-D-alanyl-D-alanine:undecaprenyl-phosphate transferase activity"/>
    <property type="evidence" value="ECO:0007669"/>
    <property type="project" value="RHEA"/>
</dbReference>
<dbReference type="GO" id="GO:0051301">
    <property type="term" value="P:cell division"/>
    <property type="evidence" value="ECO:0007669"/>
    <property type="project" value="UniProtKB-KW"/>
</dbReference>
<dbReference type="GO" id="GO:0071555">
    <property type="term" value="P:cell wall organization"/>
    <property type="evidence" value="ECO:0007669"/>
    <property type="project" value="UniProtKB-KW"/>
</dbReference>
<dbReference type="GO" id="GO:0009252">
    <property type="term" value="P:peptidoglycan biosynthetic process"/>
    <property type="evidence" value="ECO:0007669"/>
    <property type="project" value="UniProtKB-UniRule"/>
</dbReference>
<dbReference type="GO" id="GO:0008360">
    <property type="term" value="P:regulation of cell shape"/>
    <property type="evidence" value="ECO:0007669"/>
    <property type="project" value="UniProtKB-KW"/>
</dbReference>
<dbReference type="CDD" id="cd06852">
    <property type="entry name" value="GT_MraY"/>
    <property type="match status" value="1"/>
</dbReference>
<dbReference type="HAMAP" id="MF_00038">
    <property type="entry name" value="MraY"/>
    <property type="match status" value="1"/>
</dbReference>
<dbReference type="InterPro" id="IPR000715">
    <property type="entry name" value="Glycosyl_transferase_4"/>
</dbReference>
<dbReference type="InterPro" id="IPR003524">
    <property type="entry name" value="PNAcMuramoyl-5peptid_Trfase"/>
</dbReference>
<dbReference type="InterPro" id="IPR018480">
    <property type="entry name" value="PNAcMuramoyl-5peptid_Trfase_CS"/>
</dbReference>
<dbReference type="NCBIfam" id="TIGR00445">
    <property type="entry name" value="mraY"/>
    <property type="match status" value="1"/>
</dbReference>
<dbReference type="PANTHER" id="PTHR22926">
    <property type="entry name" value="PHOSPHO-N-ACETYLMURAMOYL-PENTAPEPTIDE-TRANSFERASE"/>
    <property type="match status" value="1"/>
</dbReference>
<dbReference type="PANTHER" id="PTHR22926:SF5">
    <property type="entry name" value="PHOSPHO-N-ACETYLMURAMOYL-PENTAPEPTIDE-TRANSFERASE HOMOLOG"/>
    <property type="match status" value="1"/>
</dbReference>
<dbReference type="Pfam" id="PF00953">
    <property type="entry name" value="Glycos_transf_4"/>
    <property type="match status" value="1"/>
</dbReference>
<dbReference type="PROSITE" id="PS01347">
    <property type="entry name" value="MRAY_1"/>
    <property type="match status" value="1"/>
</dbReference>
<dbReference type="PROSITE" id="PS01348">
    <property type="entry name" value="MRAY_2"/>
    <property type="match status" value="1"/>
</dbReference>
<feature type="chain" id="PRO_1000090596" description="Phospho-N-acetylmuramoyl-pentapeptide-transferase">
    <location>
        <begin position="1"/>
        <end position="389"/>
    </location>
</feature>
<feature type="transmembrane region" description="Helical" evidence="1">
    <location>
        <begin position="21"/>
        <end position="41"/>
    </location>
</feature>
<feature type="transmembrane region" description="Helical" evidence="1">
    <location>
        <begin position="71"/>
        <end position="91"/>
    </location>
</feature>
<feature type="transmembrane region" description="Helical" evidence="1">
    <location>
        <begin position="97"/>
        <end position="117"/>
    </location>
</feature>
<feature type="transmembrane region" description="Helical" evidence="1">
    <location>
        <begin position="134"/>
        <end position="154"/>
    </location>
</feature>
<feature type="transmembrane region" description="Helical" evidence="1">
    <location>
        <begin position="167"/>
        <end position="187"/>
    </location>
</feature>
<feature type="transmembrane region" description="Helical" evidence="1">
    <location>
        <begin position="190"/>
        <end position="210"/>
    </location>
</feature>
<feature type="transmembrane region" description="Helical" evidence="1">
    <location>
        <begin position="222"/>
        <end position="242"/>
    </location>
</feature>
<feature type="transmembrane region" description="Helical" evidence="1">
    <location>
        <begin position="259"/>
        <end position="279"/>
    </location>
</feature>
<feature type="transmembrane region" description="Helical" evidence="1">
    <location>
        <begin position="286"/>
        <end position="306"/>
    </location>
</feature>
<feature type="transmembrane region" description="Helical" evidence="1">
    <location>
        <begin position="311"/>
        <end position="331"/>
    </location>
</feature>
<feature type="transmembrane region" description="Helical" evidence="1">
    <location>
        <begin position="366"/>
        <end position="386"/>
    </location>
</feature>
<comment type="function">
    <text evidence="1">Catalyzes the initial step of the lipid cycle reactions in the biosynthesis of the cell wall peptidoglycan: transfers peptidoglycan precursor phospho-MurNAc-pentapeptide from UDP-MurNAc-pentapeptide onto the lipid carrier undecaprenyl phosphate, yielding undecaprenyl-pyrophosphoryl-MurNAc-pentapeptide, known as lipid I.</text>
</comment>
<comment type="catalytic activity">
    <reaction evidence="1">
        <text>UDP-N-acetyl-alpha-D-muramoyl-L-alanyl-gamma-D-glutamyl-meso-2,6-diaminopimeloyl-D-alanyl-D-alanine + di-trans,octa-cis-undecaprenyl phosphate = di-trans,octa-cis-undecaprenyl diphospho-N-acetyl-alpha-D-muramoyl-L-alanyl-D-glutamyl-meso-2,6-diaminopimeloyl-D-alanyl-D-alanine + UMP</text>
        <dbReference type="Rhea" id="RHEA:28386"/>
        <dbReference type="ChEBI" id="CHEBI:57865"/>
        <dbReference type="ChEBI" id="CHEBI:60392"/>
        <dbReference type="ChEBI" id="CHEBI:61386"/>
        <dbReference type="ChEBI" id="CHEBI:61387"/>
        <dbReference type="EC" id="2.7.8.13"/>
    </reaction>
</comment>
<comment type="cofactor">
    <cofactor evidence="1">
        <name>Mg(2+)</name>
        <dbReference type="ChEBI" id="CHEBI:18420"/>
    </cofactor>
</comment>
<comment type="pathway">
    <text evidence="1">Cell wall biogenesis; peptidoglycan biosynthesis.</text>
</comment>
<comment type="subcellular location">
    <subcellularLocation>
        <location evidence="1">Cell inner membrane</location>
        <topology evidence="1">Multi-pass membrane protein</topology>
    </subcellularLocation>
</comment>
<comment type="similarity">
    <text evidence="1">Belongs to the glycosyltransferase 4 family. MraY subfamily.</text>
</comment>
<sequence length="389" mass="42715">MLLEIARWLSDDVRAIGVLEYITMRAVLACATALLIGLVAGPRVIRKLTEMKIGQAVRAYGPESHLVKTGTPTMGGALILIAVAISTLLWADWTNRFVWVVLLVTFGFGWIGWMDDYRKVVYRDPEGMPARQKFFWQATIGLVAAVYLAFAVSAPANTELWPLFKAWVSSGFAMPLPTRADLIVPFFKSVSYPLGVLGFVALTWAVIVGTSNAVNLTDGLDGLAIMPTVMVGSALGIFAYVVGRVDYSKYLLFPYIPGAAELMVLCAAIAGAGLAFLWFNAYPAQVFMGDVGALALGGALGTIAVIVRQEIVLFIMGGVFVVETLSVMMQVTWFKYTKRKYGQGRRIFRMAPLHHHFEVGGWKETQVVVRFWIISMMLVLIGLSTLKLR</sequence>
<reference key="1">
    <citation type="journal article" date="2008" name="BMC Genomics">
        <title>The missing link: Bordetella petrii is endowed with both the metabolic versatility of environmental bacteria and virulence traits of pathogenic Bordetellae.</title>
        <authorList>
            <person name="Gross R."/>
            <person name="Guzman C.A."/>
            <person name="Sebaihia M."/>
            <person name="Martin dos Santos V.A.P."/>
            <person name="Pieper D.H."/>
            <person name="Koebnik R."/>
            <person name="Lechner M."/>
            <person name="Bartels D."/>
            <person name="Buhrmester J."/>
            <person name="Choudhuri J.V."/>
            <person name="Ebensen T."/>
            <person name="Gaigalat L."/>
            <person name="Herrmann S."/>
            <person name="Khachane A.N."/>
            <person name="Larisch C."/>
            <person name="Link S."/>
            <person name="Linke B."/>
            <person name="Meyer F."/>
            <person name="Mormann S."/>
            <person name="Nakunst D."/>
            <person name="Rueckert C."/>
            <person name="Schneiker-Bekel S."/>
            <person name="Schulze K."/>
            <person name="Voerholter F.-J."/>
            <person name="Yevsa T."/>
            <person name="Engle J.T."/>
            <person name="Goldman W.E."/>
            <person name="Puehler A."/>
            <person name="Goebel U.B."/>
            <person name="Goesmann A."/>
            <person name="Bloecker H."/>
            <person name="Kaiser O."/>
            <person name="Martinez-Arias R."/>
        </authorList>
    </citation>
    <scope>NUCLEOTIDE SEQUENCE [LARGE SCALE GENOMIC DNA]</scope>
    <source>
        <strain>ATCC BAA-461 / DSM 12804 / CCUG 43448</strain>
    </source>
</reference>
<evidence type="ECO:0000255" key="1">
    <source>
        <dbReference type="HAMAP-Rule" id="MF_00038"/>
    </source>
</evidence>
<protein>
    <recommendedName>
        <fullName evidence="1">Phospho-N-acetylmuramoyl-pentapeptide-transferase</fullName>
        <ecNumber evidence="1">2.7.8.13</ecNumber>
    </recommendedName>
    <alternativeName>
        <fullName evidence="1">UDP-MurNAc-pentapeptide phosphotransferase</fullName>
    </alternativeName>
</protein>
<proteinExistence type="inferred from homology"/>
<organism>
    <name type="scientific">Bordetella petrii (strain ATCC BAA-461 / DSM 12804 / CCUG 43448)</name>
    <dbReference type="NCBI Taxonomy" id="340100"/>
    <lineage>
        <taxon>Bacteria</taxon>
        <taxon>Pseudomonadati</taxon>
        <taxon>Pseudomonadota</taxon>
        <taxon>Betaproteobacteria</taxon>
        <taxon>Burkholderiales</taxon>
        <taxon>Alcaligenaceae</taxon>
        <taxon>Bordetella</taxon>
    </lineage>
</organism>
<name>MRAY_BORPD</name>
<accession>A9I4U2</accession>
<gene>
    <name evidence="1" type="primary">mraY</name>
    <name type="ordered locus">Bpet0694</name>
</gene>